<dbReference type="EC" id="4.2.1.11" evidence="1"/>
<dbReference type="EMBL" id="CP000781">
    <property type="protein sequence ID" value="ABS69510.1"/>
    <property type="molecule type" value="Genomic_DNA"/>
</dbReference>
<dbReference type="SMR" id="A7INB6"/>
<dbReference type="STRING" id="78245.Xaut_4289"/>
<dbReference type="KEGG" id="xau:Xaut_4289"/>
<dbReference type="eggNOG" id="COG0148">
    <property type="taxonomic scope" value="Bacteria"/>
</dbReference>
<dbReference type="HOGENOM" id="CLU_031223_2_1_5"/>
<dbReference type="OrthoDB" id="9804716at2"/>
<dbReference type="PhylomeDB" id="A7INB6"/>
<dbReference type="UniPathway" id="UPA00109">
    <property type="reaction ID" value="UER00187"/>
</dbReference>
<dbReference type="Proteomes" id="UP000002417">
    <property type="component" value="Chromosome"/>
</dbReference>
<dbReference type="GO" id="GO:0009986">
    <property type="term" value="C:cell surface"/>
    <property type="evidence" value="ECO:0007669"/>
    <property type="project" value="UniProtKB-SubCell"/>
</dbReference>
<dbReference type="GO" id="GO:0005576">
    <property type="term" value="C:extracellular region"/>
    <property type="evidence" value="ECO:0007669"/>
    <property type="project" value="UniProtKB-SubCell"/>
</dbReference>
<dbReference type="GO" id="GO:0000015">
    <property type="term" value="C:phosphopyruvate hydratase complex"/>
    <property type="evidence" value="ECO:0007669"/>
    <property type="project" value="InterPro"/>
</dbReference>
<dbReference type="GO" id="GO:0000287">
    <property type="term" value="F:magnesium ion binding"/>
    <property type="evidence" value="ECO:0007669"/>
    <property type="project" value="UniProtKB-UniRule"/>
</dbReference>
<dbReference type="GO" id="GO:0004634">
    <property type="term" value="F:phosphopyruvate hydratase activity"/>
    <property type="evidence" value="ECO:0007669"/>
    <property type="project" value="UniProtKB-UniRule"/>
</dbReference>
<dbReference type="GO" id="GO:0006096">
    <property type="term" value="P:glycolytic process"/>
    <property type="evidence" value="ECO:0007669"/>
    <property type="project" value="UniProtKB-UniRule"/>
</dbReference>
<dbReference type="CDD" id="cd03313">
    <property type="entry name" value="enolase"/>
    <property type="match status" value="1"/>
</dbReference>
<dbReference type="FunFam" id="3.20.20.120:FF:000001">
    <property type="entry name" value="Enolase"/>
    <property type="match status" value="1"/>
</dbReference>
<dbReference type="FunFam" id="3.30.390.10:FF:000001">
    <property type="entry name" value="Enolase"/>
    <property type="match status" value="1"/>
</dbReference>
<dbReference type="Gene3D" id="3.20.20.120">
    <property type="entry name" value="Enolase-like C-terminal domain"/>
    <property type="match status" value="1"/>
</dbReference>
<dbReference type="Gene3D" id="3.30.390.10">
    <property type="entry name" value="Enolase-like, N-terminal domain"/>
    <property type="match status" value="1"/>
</dbReference>
<dbReference type="HAMAP" id="MF_00318">
    <property type="entry name" value="Enolase"/>
    <property type="match status" value="1"/>
</dbReference>
<dbReference type="InterPro" id="IPR000941">
    <property type="entry name" value="Enolase"/>
</dbReference>
<dbReference type="InterPro" id="IPR036849">
    <property type="entry name" value="Enolase-like_C_sf"/>
</dbReference>
<dbReference type="InterPro" id="IPR029017">
    <property type="entry name" value="Enolase-like_N"/>
</dbReference>
<dbReference type="InterPro" id="IPR020810">
    <property type="entry name" value="Enolase_C"/>
</dbReference>
<dbReference type="InterPro" id="IPR020809">
    <property type="entry name" value="Enolase_CS"/>
</dbReference>
<dbReference type="InterPro" id="IPR020811">
    <property type="entry name" value="Enolase_N"/>
</dbReference>
<dbReference type="NCBIfam" id="TIGR01060">
    <property type="entry name" value="eno"/>
    <property type="match status" value="1"/>
</dbReference>
<dbReference type="PANTHER" id="PTHR11902">
    <property type="entry name" value="ENOLASE"/>
    <property type="match status" value="1"/>
</dbReference>
<dbReference type="PANTHER" id="PTHR11902:SF1">
    <property type="entry name" value="ENOLASE"/>
    <property type="match status" value="1"/>
</dbReference>
<dbReference type="Pfam" id="PF00113">
    <property type="entry name" value="Enolase_C"/>
    <property type="match status" value="1"/>
</dbReference>
<dbReference type="Pfam" id="PF03952">
    <property type="entry name" value="Enolase_N"/>
    <property type="match status" value="1"/>
</dbReference>
<dbReference type="PIRSF" id="PIRSF001400">
    <property type="entry name" value="Enolase"/>
    <property type="match status" value="1"/>
</dbReference>
<dbReference type="PRINTS" id="PR00148">
    <property type="entry name" value="ENOLASE"/>
</dbReference>
<dbReference type="SFLD" id="SFLDS00001">
    <property type="entry name" value="Enolase"/>
    <property type="match status" value="1"/>
</dbReference>
<dbReference type="SFLD" id="SFLDF00002">
    <property type="entry name" value="enolase"/>
    <property type="match status" value="1"/>
</dbReference>
<dbReference type="SMART" id="SM01192">
    <property type="entry name" value="Enolase_C"/>
    <property type="match status" value="1"/>
</dbReference>
<dbReference type="SMART" id="SM01193">
    <property type="entry name" value="Enolase_N"/>
    <property type="match status" value="1"/>
</dbReference>
<dbReference type="SUPFAM" id="SSF51604">
    <property type="entry name" value="Enolase C-terminal domain-like"/>
    <property type="match status" value="1"/>
</dbReference>
<dbReference type="SUPFAM" id="SSF54826">
    <property type="entry name" value="Enolase N-terminal domain-like"/>
    <property type="match status" value="1"/>
</dbReference>
<dbReference type="PROSITE" id="PS00164">
    <property type="entry name" value="ENOLASE"/>
    <property type="match status" value="1"/>
</dbReference>
<gene>
    <name evidence="1" type="primary">eno</name>
    <name type="ordered locus">Xaut_4289</name>
</gene>
<proteinExistence type="inferred from homology"/>
<keyword id="KW-0963">Cytoplasm</keyword>
<keyword id="KW-0324">Glycolysis</keyword>
<keyword id="KW-0456">Lyase</keyword>
<keyword id="KW-0460">Magnesium</keyword>
<keyword id="KW-0479">Metal-binding</keyword>
<keyword id="KW-1185">Reference proteome</keyword>
<keyword id="KW-0964">Secreted</keyword>
<protein>
    <recommendedName>
        <fullName evidence="1">Enolase</fullName>
        <ecNumber evidence="1">4.2.1.11</ecNumber>
    </recommendedName>
    <alternativeName>
        <fullName evidence="1">2-phospho-D-glycerate hydro-lyase</fullName>
    </alternativeName>
    <alternativeName>
        <fullName evidence="1">2-phosphoglycerate dehydratase</fullName>
    </alternativeName>
</protein>
<organism>
    <name type="scientific">Xanthobacter autotrophicus (strain ATCC BAA-1158 / Py2)</name>
    <dbReference type="NCBI Taxonomy" id="78245"/>
    <lineage>
        <taxon>Bacteria</taxon>
        <taxon>Pseudomonadati</taxon>
        <taxon>Pseudomonadota</taxon>
        <taxon>Alphaproteobacteria</taxon>
        <taxon>Hyphomicrobiales</taxon>
        <taxon>Xanthobacteraceae</taxon>
        <taxon>Xanthobacter</taxon>
    </lineage>
</organism>
<comment type="function">
    <text evidence="1">Catalyzes the reversible conversion of 2-phosphoglycerate (2-PG) into phosphoenolpyruvate (PEP). It is essential for the degradation of carbohydrates via glycolysis.</text>
</comment>
<comment type="catalytic activity">
    <reaction evidence="1">
        <text>(2R)-2-phosphoglycerate = phosphoenolpyruvate + H2O</text>
        <dbReference type="Rhea" id="RHEA:10164"/>
        <dbReference type="ChEBI" id="CHEBI:15377"/>
        <dbReference type="ChEBI" id="CHEBI:58289"/>
        <dbReference type="ChEBI" id="CHEBI:58702"/>
        <dbReference type="EC" id="4.2.1.11"/>
    </reaction>
</comment>
<comment type="cofactor">
    <cofactor evidence="1">
        <name>Mg(2+)</name>
        <dbReference type="ChEBI" id="CHEBI:18420"/>
    </cofactor>
    <text evidence="1">Binds a second Mg(2+) ion via substrate during catalysis.</text>
</comment>
<comment type="pathway">
    <text evidence="1">Carbohydrate degradation; glycolysis; pyruvate from D-glyceraldehyde 3-phosphate: step 4/5.</text>
</comment>
<comment type="subcellular location">
    <subcellularLocation>
        <location evidence="1">Cytoplasm</location>
    </subcellularLocation>
    <subcellularLocation>
        <location evidence="1">Secreted</location>
    </subcellularLocation>
    <subcellularLocation>
        <location evidence="1">Cell surface</location>
    </subcellularLocation>
    <text evidence="1">Fractions of enolase are present in both the cytoplasm and on the cell surface.</text>
</comment>
<comment type="similarity">
    <text evidence="1">Belongs to the enolase family.</text>
</comment>
<feature type="chain" id="PRO_1000115935" description="Enolase">
    <location>
        <begin position="1"/>
        <end position="427"/>
    </location>
</feature>
<feature type="active site" description="Proton donor" evidence="1">
    <location>
        <position position="205"/>
    </location>
</feature>
<feature type="active site" description="Proton acceptor" evidence="1">
    <location>
        <position position="337"/>
    </location>
</feature>
<feature type="binding site" evidence="1">
    <location>
        <position position="163"/>
    </location>
    <ligand>
        <name>(2R)-2-phosphoglycerate</name>
        <dbReference type="ChEBI" id="CHEBI:58289"/>
    </ligand>
</feature>
<feature type="binding site" evidence="1">
    <location>
        <position position="242"/>
    </location>
    <ligand>
        <name>Mg(2+)</name>
        <dbReference type="ChEBI" id="CHEBI:18420"/>
    </ligand>
</feature>
<feature type="binding site" evidence="1">
    <location>
        <position position="285"/>
    </location>
    <ligand>
        <name>Mg(2+)</name>
        <dbReference type="ChEBI" id="CHEBI:18420"/>
    </ligand>
</feature>
<feature type="binding site" evidence="1">
    <location>
        <position position="312"/>
    </location>
    <ligand>
        <name>Mg(2+)</name>
        <dbReference type="ChEBI" id="CHEBI:18420"/>
    </ligand>
</feature>
<feature type="binding site" evidence="1">
    <location>
        <position position="337"/>
    </location>
    <ligand>
        <name>(2R)-2-phosphoglycerate</name>
        <dbReference type="ChEBI" id="CHEBI:58289"/>
    </ligand>
</feature>
<feature type="binding site" evidence="1">
    <location>
        <position position="366"/>
    </location>
    <ligand>
        <name>(2R)-2-phosphoglycerate</name>
        <dbReference type="ChEBI" id="CHEBI:58289"/>
    </ligand>
</feature>
<feature type="binding site" evidence="1">
    <location>
        <position position="367"/>
    </location>
    <ligand>
        <name>(2R)-2-phosphoglycerate</name>
        <dbReference type="ChEBI" id="CHEBI:58289"/>
    </ligand>
</feature>
<feature type="binding site" evidence="1">
    <location>
        <position position="388"/>
    </location>
    <ligand>
        <name>(2R)-2-phosphoglycerate</name>
        <dbReference type="ChEBI" id="CHEBI:58289"/>
    </ligand>
</feature>
<reference key="1">
    <citation type="submission" date="2007-07" db="EMBL/GenBank/DDBJ databases">
        <title>Complete sequence of chromosome of Xanthobacter autotrophicus Py2.</title>
        <authorList>
            <consortium name="US DOE Joint Genome Institute"/>
            <person name="Copeland A."/>
            <person name="Lucas S."/>
            <person name="Lapidus A."/>
            <person name="Barry K."/>
            <person name="Glavina del Rio T."/>
            <person name="Hammon N."/>
            <person name="Israni S."/>
            <person name="Dalin E."/>
            <person name="Tice H."/>
            <person name="Pitluck S."/>
            <person name="Sims D."/>
            <person name="Brettin T."/>
            <person name="Bruce D."/>
            <person name="Detter J.C."/>
            <person name="Han C."/>
            <person name="Tapia R."/>
            <person name="Brainard J."/>
            <person name="Schmutz J."/>
            <person name="Larimer F."/>
            <person name="Land M."/>
            <person name="Hauser L."/>
            <person name="Kyrpides N."/>
            <person name="Kim E."/>
            <person name="Ensigns S.A."/>
            <person name="Richardson P."/>
        </authorList>
    </citation>
    <scope>NUCLEOTIDE SEQUENCE [LARGE SCALE GENOMIC DNA]</scope>
    <source>
        <strain>ATCC BAA-1158 / Py2</strain>
    </source>
</reference>
<accession>A7INB6</accession>
<sequence>MTAIVDIIGREILDSRGNPTVEVDVVLEDGALGRAAVPSGASTGAHEAVELRDGDASRYLGKGVGMAVDAVNGEIFDAIGGYEAEDQAHIDAALLALDGTPNKGRLGANAILGVSLAVAKAAAESKGLPLYRYVGGVNARVLPVPMMNIINGGAHADNPIDFQEFMILPAGAPSFAEGLRWGAEIFHTLKKGLKDAGHNTNVGDEGGFAPNLASAEAALEFVLKAIEKAGFKPGEDVYLGLDCASTEFFKNGVYNYEGEGTVRDIEAQVAYLAELVAKYPIVTIEDGMAEDDWVGWKLLTDTVGSKCQLVGDDLFVTNVERLSRGIKDGVGNSILVKVNQIGSLTETLDAVEMAHKAGYRAVMSHRSGETEDATIADLAVATNCGQIKTGSLARSDRTAKYNQLLRIEQELGDSARYAGKAALKALA</sequence>
<evidence type="ECO:0000255" key="1">
    <source>
        <dbReference type="HAMAP-Rule" id="MF_00318"/>
    </source>
</evidence>
<name>ENO_XANP2</name>